<gene>
    <name evidence="2" type="primary">atpE</name>
    <name type="ordered locus">STY3908</name>
    <name type="ordered locus">t3649</name>
</gene>
<accession>P68703</accession>
<accession>P00844</accession>
<keyword id="KW-0066">ATP synthesis</keyword>
<keyword id="KW-0997">Cell inner membrane</keyword>
<keyword id="KW-1003">Cell membrane</keyword>
<keyword id="KW-0138">CF(0)</keyword>
<keyword id="KW-0291">Formylation</keyword>
<keyword id="KW-0375">Hydrogen ion transport</keyword>
<keyword id="KW-0406">Ion transport</keyword>
<keyword id="KW-0446">Lipid-binding</keyword>
<keyword id="KW-0472">Membrane</keyword>
<keyword id="KW-0812">Transmembrane</keyword>
<keyword id="KW-1133">Transmembrane helix</keyword>
<keyword id="KW-0813">Transport</keyword>
<sequence length="79" mass="8256">MENLNMDLLYMAAAVMMGLAAIGAAIGIGILGGKFLEGAARQPDLIPLLRTQFFIVMGLVDAIPMIAVGLGLYVMFAVA</sequence>
<name>ATPL_SALTI</name>
<dbReference type="EMBL" id="AL513382">
    <property type="protein sequence ID" value="CAD03125.1"/>
    <property type="molecule type" value="Genomic_DNA"/>
</dbReference>
<dbReference type="EMBL" id="AE014613">
    <property type="protein sequence ID" value="AAO71146.1"/>
    <property type="molecule type" value="Genomic_DNA"/>
</dbReference>
<dbReference type="RefSeq" id="NP_458073.1">
    <property type="nucleotide sequence ID" value="NC_003198.1"/>
</dbReference>
<dbReference type="RefSeq" id="WP_000429386.1">
    <property type="nucleotide sequence ID" value="NZ_WSUR01000023.1"/>
</dbReference>
<dbReference type="SMR" id="P68703"/>
<dbReference type="STRING" id="220341.gene:17587768"/>
<dbReference type="GeneID" id="98390858"/>
<dbReference type="KEGG" id="stt:t3649"/>
<dbReference type="KEGG" id="sty:STY3908"/>
<dbReference type="PATRIC" id="fig|220341.7.peg.3988"/>
<dbReference type="eggNOG" id="ENOG5032S3K">
    <property type="taxonomic scope" value="Bacteria"/>
</dbReference>
<dbReference type="HOGENOM" id="CLU_148047_1_0_6"/>
<dbReference type="OMA" id="RTQMFIV"/>
<dbReference type="OrthoDB" id="9811659at2"/>
<dbReference type="Proteomes" id="UP000000541">
    <property type="component" value="Chromosome"/>
</dbReference>
<dbReference type="Proteomes" id="UP000002670">
    <property type="component" value="Chromosome"/>
</dbReference>
<dbReference type="GO" id="GO:0005886">
    <property type="term" value="C:plasma membrane"/>
    <property type="evidence" value="ECO:0007669"/>
    <property type="project" value="UniProtKB-SubCell"/>
</dbReference>
<dbReference type="GO" id="GO:0045259">
    <property type="term" value="C:proton-transporting ATP synthase complex"/>
    <property type="evidence" value="ECO:0007669"/>
    <property type="project" value="UniProtKB-KW"/>
</dbReference>
<dbReference type="GO" id="GO:0033177">
    <property type="term" value="C:proton-transporting two-sector ATPase complex, proton-transporting domain"/>
    <property type="evidence" value="ECO:0007669"/>
    <property type="project" value="InterPro"/>
</dbReference>
<dbReference type="GO" id="GO:0008289">
    <property type="term" value="F:lipid binding"/>
    <property type="evidence" value="ECO:0007669"/>
    <property type="project" value="UniProtKB-KW"/>
</dbReference>
<dbReference type="GO" id="GO:0046933">
    <property type="term" value="F:proton-transporting ATP synthase activity, rotational mechanism"/>
    <property type="evidence" value="ECO:0007669"/>
    <property type="project" value="UniProtKB-UniRule"/>
</dbReference>
<dbReference type="CDD" id="cd18185">
    <property type="entry name" value="ATP-synt_Fo_c_ATPE"/>
    <property type="match status" value="1"/>
</dbReference>
<dbReference type="FunFam" id="1.20.20.10:FF:000002">
    <property type="entry name" value="ATP synthase subunit c"/>
    <property type="match status" value="1"/>
</dbReference>
<dbReference type="Gene3D" id="1.20.20.10">
    <property type="entry name" value="F1F0 ATP synthase subunit C"/>
    <property type="match status" value="1"/>
</dbReference>
<dbReference type="HAMAP" id="MF_01396">
    <property type="entry name" value="ATP_synth_c_bact"/>
    <property type="match status" value="1"/>
</dbReference>
<dbReference type="InterPro" id="IPR005953">
    <property type="entry name" value="ATP_synth_csu_bac/chlpt"/>
</dbReference>
<dbReference type="InterPro" id="IPR000454">
    <property type="entry name" value="ATP_synth_F0_csu"/>
</dbReference>
<dbReference type="InterPro" id="IPR020537">
    <property type="entry name" value="ATP_synth_F0_csu_DDCD_BS"/>
</dbReference>
<dbReference type="InterPro" id="IPR038662">
    <property type="entry name" value="ATP_synth_F0_csu_sf"/>
</dbReference>
<dbReference type="InterPro" id="IPR002379">
    <property type="entry name" value="ATPase_proteolipid_c-like_dom"/>
</dbReference>
<dbReference type="InterPro" id="IPR035921">
    <property type="entry name" value="F/V-ATP_Csub_sf"/>
</dbReference>
<dbReference type="NCBIfam" id="TIGR01260">
    <property type="entry name" value="ATP_synt_c"/>
    <property type="match status" value="1"/>
</dbReference>
<dbReference type="NCBIfam" id="NF005363">
    <property type="entry name" value="PRK06876.1"/>
    <property type="match status" value="1"/>
</dbReference>
<dbReference type="Pfam" id="PF00137">
    <property type="entry name" value="ATP-synt_C"/>
    <property type="match status" value="1"/>
</dbReference>
<dbReference type="PRINTS" id="PR00124">
    <property type="entry name" value="ATPASEC"/>
</dbReference>
<dbReference type="SUPFAM" id="SSF81333">
    <property type="entry name" value="F1F0 ATP synthase subunit C"/>
    <property type="match status" value="1"/>
</dbReference>
<dbReference type="PROSITE" id="PS00605">
    <property type="entry name" value="ATPASE_C"/>
    <property type="match status" value="1"/>
</dbReference>
<proteinExistence type="inferred from homology"/>
<feature type="chain" id="PRO_0000112162" description="ATP synthase subunit c">
    <location>
        <begin position="1"/>
        <end position="79"/>
    </location>
</feature>
<feature type="transmembrane region" description="Helical" evidence="2">
    <location>
        <begin position="11"/>
        <end position="31"/>
    </location>
</feature>
<feature type="transmembrane region" description="Helical" evidence="2">
    <location>
        <begin position="53"/>
        <end position="73"/>
    </location>
</feature>
<feature type="site" description="Reversibly protonated during proton transport" evidence="2">
    <location>
        <position position="61"/>
    </location>
</feature>
<feature type="modified residue" description="N-formylmethionine" evidence="1">
    <location>
        <position position="1"/>
    </location>
</feature>
<protein>
    <recommendedName>
        <fullName evidence="2">ATP synthase subunit c</fullName>
    </recommendedName>
    <alternativeName>
        <fullName evidence="2">ATP synthase F(0) sector subunit c</fullName>
    </alternativeName>
    <alternativeName>
        <fullName evidence="2">F-type ATPase subunit c</fullName>
        <shortName evidence="2">F-ATPase subunit c</shortName>
    </alternativeName>
    <alternativeName>
        <fullName evidence="2">Lipid-binding protein</fullName>
    </alternativeName>
</protein>
<organism>
    <name type="scientific">Salmonella typhi</name>
    <dbReference type="NCBI Taxonomy" id="90370"/>
    <lineage>
        <taxon>Bacteria</taxon>
        <taxon>Pseudomonadati</taxon>
        <taxon>Pseudomonadota</taxon>
        <taxon>Gammaproteobacteria</taxon>
        <taxon>Enterobacterales</taxon>
        <taxon>Enterobacteriaceae</taxon>
        <taxon>Salmonella</taxon>
    </lineage>
</organism>
<comment type="function">
    <text evidence="2">F(1)F(0) ATP synthase produces ATP from ADP in the presence of a proton or sodium gradient. F-type ATPases consist of two structural domains, F(1) containing the extramembraneous catalytic core and F(0) containing the membrane proton channel, linked together by a central stalk and a peripheral stalk. During catalysis, ATP synthesis in the catalytic domain of F(1) is coupled via a rotary mechanism of the central stalk subunits to proton translocation.</text>
</comment>
<comment type="function">
    <text evidence="2">Key component of the F(0) channel; it plays a direct role in translocation across the membrane. A homomeric c-ring of between 10-14 subunits forms the central stalk rotor element with the F(1) delta and epsilon subunits.</text>
</comment>
<comment type="subunit">
    <text evidence="2">F-type ATPases have 2 components, F(1) - the catalytic core - and F(0) - the membrane proton channel. F(1) has five subunits: alpha(3), beta(3), gamma(1), delta(1), epsilon(1). F(0) has three main subunits: a(1), b(2) and c(10-14). The alpha and beta chains form an alternating ring which encloses part of the gamma chain. F(1) is attached to F(0) by a central stalk formed by the gamma and epsilon chains, while a peripheral stalk is formed by the delta and b chains.</text>
</comment>
<comment type="subcellular location">
    <subcellularLocation>
        <location evidence="2">Cell inner membrane</location>
        <topology evidence="2">Multi-pass membrane protein</topology>
    </subcellularLocation>
</comment>
<comment type="miscellaneous">
    <text evidence="1">Dicyclohexylcarbodiimide (DCDD) binding to the active aspartate residue inhibits ATPase in vitro.</text>
</comment>
<comment type="similarity">
    <text evidence="2">Belongs to the ATPase C chain family.</text>
</comment>
<evidence type="ECO:0000250" key="1"/>
<evidence type="ECO:0000255" key="2">
    <source>
        <dbReference type="HAMAP-Rule" id="MF_01396"/>
    </source>
</evidence>
<reference key="1">
    <citation type="journal article" date="2001" name="Nature">
        <title>Complete genome sequence of a multiple drug resistant Salmonella enterica serovar Typhi CT18.</title>
        <authorList>
            <person name="Parkhill J."/>
            <person name="Dougan G."/>
            <person name="James K.D."/>
            <person name="Thomson N.R."/>
            <person name="Pickard D."/>
            <person name="Wain J."/>
            <person name="Churcher C.M."/>
            <person name="Mungall K.L."/>
            <person name="Bentley S.D."/>
            <person name="Holden M.T.G."/>
            <person name="Sebaihia M."/>
            <person name="Baker S."/>
            <person name="Basham D."/>
            <person name="Brooks K."/>
            <person name="Chillingworth T."/>
            <person name="Connerton P."/>
            <person name="Cronin A."/>
            <person name="Davis P."/>
            <person name="Davies R.M."/>
            <person name="Dowd L."/>
            <person name="White N."/>
            <person name="Farrar J."/>
            <person name="Feltwell T."/>
            <person name="Hamlin N."/>
            <person name="Haque A."/>
            <person name="Hien T.T."/>
            <person name="Holroyd S."/>
            <person name="Jagels K."/>
            <person name="Krogh A."/>
            <person name="Larsen T.S."/>
            <person name="Leather S."/>
            <person name="Moule S."/>
            <person name="O'Gaora P."/>
            <person name="Parry C."/>
            <person name="Quail M.A."/>
            <person name="Rutherford K.M."/>
            <person name="Simmonds M."/>
            <person name="Skelton J."/>
            <person name="Stevens K."/>
            <person name="Whitehead S."/>
            <person name="Barrell B.G."/>
        </authorList>
    </citation>
    <scope>NUCLEOTIDE SEQUENCE [LARGE SCALE GENOMIC DNA]</scope>
    <source>
        <strain>CT18</strain>
    </source>
</reference>
<reference key="2">
    <citation type="journal article" date="2003" name="J. Bacteriol.">
        <title>Comparative genomics of Salmonella enterica serovar Typhi strains Ty2 and CT18.</title>
        <authorList>
            <person name="Deng W."/>
            <person name="Liou S.-R."/>
            <person name="Plunkett G. III"/>
            <person name="Mayhew G.F."/>
            <person name="Rose D.J."/>
            <person name="Burland V."/>
            <person name="Kodoyianni V."/>
            <person name="Schwartz D.C."/>
            <person name="Blattner F.R."/>
        </authorList>
    </citation>
    <scope>NUCLEOTIDE SEQUENCE [LARGE SCALE GENOMIC DNA]</scope>
    <source>
        <strain>ATCC 700931 / Ty2</strain>
    </source>
</reference>